<protein>
    <recommendedName>
        <fullName evidence="1">Small ribosomal subunit protein uS5</fullName>
    </recommendedName>
    <alternativeName>
        <fullName evidence="2">30S ribosomal protein S5</fullName>
    </alternativeName>
</protein>
<reference key="1">
    <citation type="journal article" date="2006" name="Appl. Environ. Microbiol.">
        <title>Complete genome sequence of the marine, chemolithoautotrophic, ammonia-oxidizing bacterium Nitrosococcus oceani ATCC 19707.</title>
        <authorList>
            <person name="Klotz M.G."/>
            <person name="Arp D.J."/>
            <person name="Chain P.S.G."/>
            <person name="El-Sheikh A.F."/>
            <person name="Hauser L.J."/>
            <person name="Hommes N.G."/>
            <person name="Larimer F.W."/>
            <person name="Malfatti S.A."/>
            <person name="Norton J.M."/>
            <person name="Poret-Peterson A.T."/>
            <person name="Vergez L.M."/>
            <person name="Ward B.B."/>
        </authorList>
    </citation>
    <scope>NUCLEOTIDE SEQUENCE [LARGE SCALE GENOMIC DNA]</scope>
    <source>
        <strain>ATCC 19707 / BCRC 17464 / JCM 30415 / NCIMB 11848 / C-107</strain>
    </source>
</reference>
<gene>
    <name evidence="1" type="primary">rpsE</name>
    <name type="ordered locus">Noc_2307</name>
</gene>
<organism>
    <name type="scientific">Nitrosococcus oceani (strain ATCC 19707 / BCRC 17464 / JCM 30415 / NCIMB 11848 / C-107)</name>
    <dbReference type="NCBI Taxonomy" id="323261"/>
    <lineage>
        <taxon>Bacteria</taxon>
        <taxon>Pseudomonadati</taxon>
        <taxon>Pseudomonadota</taxon>
        <taxon>Gammaproteobacteria</taxon>
        <taxon>Chromatiales</taxon>
        <taxon>Chromatiaceae</taxon>
        <taxon>Nitrosococcus</taxon>
    </lineage>
</organism>
<comment type="function">
    <text evidence="1">With S4 and S12 plays an important role in translational accuracy.</text>
</comment>
<comment type="function">
    <text evidence="1">Located at the back of the 30S subunit body where it stabilizes the conformation of the head with respect to the body.</text>
</comment>
<comment type="subunit">
    <text evidence="1">Part of the 30S ribosomal subunit. Contacts proteins S4 and S8.</text>
</comment>
<comment type="domain">
    <text>The N-terminal domain interacts with the head of the 30S subunit; the C-terminal domain interacts with the body and contacts protein S4. The interaction surface between S4 and S5 is involved in control of translational fidelity.</text>
</comment>
<comment type="similarity">
    <text evidence="1">Belongs to the universal ribosomal protein uS5 family.</text>
</comment>
<sequence length="170" mass="17597">MAQTDRRATGDGLLEKLVGVRRVAKVVKGGRQFGFSALTVVGDGKGRVGFGRGKAREVPVAIQKAMENARKNMISVPLEGDTLQHPITARHGAAKVHMQPASEGTGIIAGGAMRAVFEVVGVHNVLAKCIGSANPVNVVQATVKGLVQMSSPEAIAAKRGKNLEEIVGGG</sequence>
<accession>Q3J8T1</accession>
<dbReference type="EMBL" id="CP000127">
    <property type="protein sequence ID" value="ABA58765.1"/>
    <property type="molecule type" value="Genomic_DNA"/>
</dbReference>
<dbReference type="RefSeq" id="WP_011330916.1">
    <property type="nucleotide sequence ID" value="NC_007484.1"/>
</dbReference>
<dbReference type="SMR" id="Q3J8T1"/>
<dbReference type="FunCoup" id="Q3J8T1">
    <property type="interactions" value="703"/>
</dbReference>
<dbReference type="STRING" id="323261.Noc_2307"/>
<dbReference type="KEGG" id="noc:Noc_2307"/>
<dbReference type="eggNOG" id="COG0098">
    <property type="taxonomic scope" value="Bacteria"/>
</dbReference>
<dbReference type="HOGENOM" id="CLU_065898_2_2_6"/>
<dbReference type="InParanoid" id="Q3J8T1"/>
<dbReference type="Proteomes" id="UP000006838">
    <property type="component" value="Chromosome"/>
</dbReference>
<dbReference type="GO" id="GO:0015935">
    <property type="term" value="C:small ribosomal subunit"/>
    <property type="evidence" value="ECO:0007669"/>
    <property type="project" value="InterPro"/>
</dbReference>
<dbReference type="GO" id="GO:0019843">
    <property type="term" value="F:rRNA binding"/>
    <property type="evidence" value="ECO:0007669"/>
    <property type="project" value="UniProtKB-UniRule"/>
</dbReference>
<dbReference type="GO" id="GO:0003735">
    <property type="term" value="F:structural constituent of ribosome"/>
    <property type="evidence" value="ECO:0007669"/>
    <property type="project" value="InterPro"/>
</dbReference>
<dbReference type="GO" id="GO:0006412">
    <property type="term" value="P:translation"/>
    <property type="evidence" value="ECO:0007669"/>
    <property type="project" value="UniProtKB-UniRule"/>
</dbReference>
<dbReference type="FunFam" id="3.30.160.20:FF:000001">
    <property type="entry name" value="30S ribosomal protein S5"/>
    <property type="match status" value="1"/>
</dbReference>
<dbReference type="FunFam" id="3.30.230.10:FF:000002">
    <property type="entry name" value="30S ribosomal protein S5"/>
    <property type="match status" value="1"/>
</dbReference>
<dbReference type="Gene3D" id="3.30.160.20">
    <property type="match status" value="1"/>
</dbReference>
<dbReference type="Gene3D" id="3.30.230.10">
    <property type="match status" value="1"/>
</dbReference>
<dbReference type="HAMAP" id="MF_01307_B">
    <property type="entry name" value="Ribosomal_uS5_B"/>
    <property type="match status" value="1"/>
</dbReference>
<dbReference type="InterPro" id="IPR020568">
    <property type="entry name" value="Ribosomal_Su5_D2-typ_SF"/>
</dbReference>
<dbReference type="InterPro" id="IPR000851">
    <property type="entry name" value="Ribosomal_uS5"/>
</dbReference>
<dbReference type="InterPro" id="IPR005712">
    <property type="entry name" value="Ribosomal_uS5_bac-type"/>
</dbReference>
<dbReference type="InterPro" id="IPR005324">
    <property type="entry name" value="Ribosomal_uS5_C"/>
</dbReference>
<dbReference type="InterPro" id="IPR013810">
    <property type="entry name" value="Ribosomal_uS5_N"/>
</dbReference>
<dbReference type="InterPro" id="IPR018192">
    <property type="entry name" value="Ribosomal_uS5_N_CS"/>
</dbReference>
<dbReference type="InterPro" id="IPR014721">
    <property type="entry name" value="Ribsml_uS5_D2-typ_fold_subgr"/>
</dbReference>
<dbReference type="NCBIfam" id="TIGR01021">
    <property type="entry name" value="rpsE_bact"/>
    <property type="match status" value="1"/>
</dbReference>
<dbReference type="PANTHER" id="PTHR48277">
    <property type="entry name" value="MITOCHONDRIAL RIBOSOMAL PROTEIN S5"/>
    <property type="match status" value="1"/>
</dbReference>
<dbReference type="PANTHER" id="PTHR48277:SF1">
    <property type="entry name" value="MITOCHONDRIAL RIBOSOMAL PROTEIN S5"/>
    <property type="match status" value="1"/>
</dbReference>
<dbReference type="Pfam" id="PF00333">
    <property type="entry name" value="Ribosomal_S5"/>
    <property type="match status" value="1"/>
</dbReference>
<dbReference type="Pfam" id="PF03719">
    <property type="entry name" value="Ribosomal_S5_C"/>
    <property type="match status" value="1"/>
</dbReference>
<dbReference type="SUPFAM" id="SSF54768">
    <property type="entry name" value="dsRNA-binding domain-like"/>
    <property type="match status" value="1"/>
</dbReference>
<dbReference type="SUPFAM" id="SSF54211">
    <property type="entry name" value="Ribosomal protein S5 domain 2-like"/>
    <property type="match status" value="1"/>
</dbReference>
<dbReference type="PROSITE" id="PS00585">
    <property type="entry name" value="RIBOSOMAL_S5"/>
    <property type="match status" value="1"/>
</dbReference>
<dbReference type="PROSITE" id="PS50881">
    <property type="entry name" value="S5_DSRBD"/>
    <property type="match status" value="1"/>
</dbReference>
<evidence type="ECO:0000255" key="1">
    <source>
        <dbReference type="HAMAP-Rule" id="MF_01307"/>
    </source>
</evidence>
<evidence type="ECO:0000305" key="2"/>
<proteinExistence type="inferred from homology"/>
<name>RS5_NITOC</name>
<feature type="chain" id="PRO_0000230352" description="Small ribosomal subunit protein uS5">
    <location>
        <begin position="1"/>
        <end position="170"/>
    </location>
</feature>
<feature type="domain" description="S5 DRBM" evidence="1">
    <location>
        <begin position="13"/>
        <end position="76"/>
    </location>
</feature>
<keyword id="KW-1185">Reference proteome</keyword>
<keyword id="KW-0687">Ribonucleoprotein</keyword>
<keyword id="KW-0689">Ribosomal protein</keyword>
<keyword id="KW-0694">RNA-binding</keyword>
<keyword id="KW-0699">rRNA-binding</keyword>